<accession>Q8T9W1</accession>
<accession>Q54M85</accession>
<sequence length="1825" mass="202642">MKSNTNIRVLLVSGLILIFIFLGIKFEFINKNNNDKIGINRKLEFSYFTKNNNNNNNNNFKQDQLKNKKDKRILLKNEIIDTNIKKNIKKNNQKNNNEEIFPNFISRLLKSNDDMEIQQFTYRKSHYIVQFKDHINDETREQFKQFLINTDIVLDEQPYQSHIVNYIPHDSFLVLMNDEQSNLLSSKEWVSWIGEFEPSNKIHLNYNEKSIGLPVYIKLSDSTNSLIQRWENTLNSILTSYNSKVKLTLINQKKLKSIVYCNDESSSQSSCSLVSSEKLVYQWISEQSESNYIERSEKFQTANRLSPKAIFGTKDTLVNNDRIDIPLRGKGQILSIADTGLDGSHCFFSDSNNPIPYNSVNLNHRKVVTYIGSLHDNEDYVDGHGTHVCGSAAGAPEDSSLAISSFSGLATDAKIAFFDLASDPSNNEPVPPEDYSQLYQPLYNAGARVHGDSWGSLSIQGYLGSYSDDAGSIDDFLYTHPDFIILRAAGNNEQYSSLLSQATAKNVITVGAEQTTHESYTTDALEYSNFETVAKSTLNSLCQSFDDKYCTYTTAQCCTEYSTVKGLSGCCTSYIKNSYASIFSSQPELYNENNICSFSSKGPTHDGRLKPDIVAPGQYITSARSNGANTTDQCGDGSLPNTNALLSESGTSMATPLATAATTILRQYLVDGYYPTGSIVESNKLQPTGSLLKALMINNAQLLNGTFPLSSTNTNPSNAVFDTFAGANFVQGWGSLRMSEWLYVESSGVKPKPSRWVGIGELGKDKKASNWKEYSLSTGQNVSYCFTYKPSSSGSNSGGIPRIVATLVWTDPPSYSGAKLNLVNNLDLTMTNTESEFIFYSNSGGSSYNGTKGTTLPLQDSINNVEGIIYTPINTKSEISFRFIIAGTNIPIGPQNFSFVFHGENGEFDWADSCMQCNPDDTQPCFIENGVGSQTCGDDYLWGRCLVQSCNNNYNYNSISDKCSKFLSYNYIVIIVAGGTMSLIITVLILIKYMEYKENGNKFSLKEFFSGVLGTGKNVSGGGKGGSGGSGSGSGTLKDGTIDDGTGIHVRPKPKDAPVTPPDLYSLLSPFIIEITISTACSLVATAASILQPYYIGQIIQDIPTTKGIGDLRDQFIIIFLLALLEFVFSTISSWISGIVNEKMVMRLQNKVFRALIAQDMGFFQKNSAAVLMNVLIVDTPMLRSSLTGILLSVSVGICKFVGSLVFIFTISWKLSLAFFATVPVLAIVTQVQSKFTKRLTRRLLFHNSKASQHGQESMVNMHVVSNYCKQDREIAKYSEQLMMVFQISRRLIINNTFAASIKWLMVESLAFIILYFGAYLAIQKQFTVGLLVSFSLYIGYVIDSSTTLFGVYSSYVQCLASATRVFLILRSAPRKRTTLEEEELDNIIDTNQDNNNNNNNDDISDSSSDDDDDNNNNKNSKNNKTKSGESDDSSSEDAEYKKNKNKRNNGKMTTKLSNSPPLVGEGIDNNNNNNNDNNINDDNNQQDPNNNNNEIDDDGDDDGDDDDEGEDENNNNNNNDDPNDNNGIEMLTEKQLRKRKRQMKKEFYKKTGISCLELNLIPSAYTELTECRGEIEFKNVSFCYPSRADVGVLYNIDLKFESGKCYGLVGPSGSGKSTLLELISRFYSLHPSGGKIYMDGIDIAKIRPSNLRSFVTNVHQHPFLFDATISENIGYALDNPTQEDIIEAAKLANAHEFIQSLPKQYDTMLTDGGNLSGGQKKRIAVARAICAKRKIMLLDEITAELDPESEEAINKSIKVLTRGHTVVMVAHKVAAVRDCDKIFVLDKGQIVEQGTHNQLMAKKGKYYRMFAFSEDDDYAPLLVL</sequence>
<comment type="subcellular location">
    <subcellularLocation>
        <location evidence="3">Membrane</location>
        <topology evidence="3">Multi-pass membrane protein</topology>
    </subcellularLocation>
</comment>
<comment type="similarity">
    <text evidence="6">In the C-terminal section; belongs to the ABC transporter superfamily. ABCB family. Multidrug resistance exporter (TC 3.A.1.201) subfamily.</text>
</comment>
<comment type="similarity">
    <text evidence="6">In the N-terminal section; belongs to the peptidase S8 family.</text>
</comment>
<name>TAGD_DICDI</name>
<evidence type="ECO:0000255" key="1"/>
<evidence type="ECO:0000255" key="2">
    <source>
        <dbReference type="PROSITE-ProRule" id="PRU00434"/>
    </source>
</evidence>
<evidence type="ECO:0000255" key="3">
    <source>
        <dbReference type="PROSITE-ProRule" id="PRU00441"/>
    </source>
</evidence>
<evidence type="ECO:0000255" key="4">
    <source>
        <dbReference type="PROSITE-ProRule" id="PRU01240"/>
    </source>
</evidence>
<evidence type="ECO:0000256" key="5">
    <source>
        <dbReference type="SAM" id="MobiDB-lite"/>
    </source>
</evidence>
<evidence type="ECO:0000305" key="6"/>
<gene>
    <name type="primary">tagD</name>
    <name type="ORF">DDB_G0286123</name>
</gene>
<proteinExistence type="inferred from homology"/>
<reference key="1">
    <citation type="journal article" date="2002" name="Eukaryot. Cell">
        <title>Evolutionary analyses of ABC transporters of Dictyostelium discoideum.</title>
        <authorList>
            <person name="Anjard C."/>
            <person name="Loomis W.F."/>
        </authorList>
    </citation>
    <scope>NUCLEOTIDE SEQUENCE [GENOMIC DNA]</scope>
    <source>
        <strain>AX4</strain>
    </source>
</reference>
<reference key="2">
    <citation type="journal article" date="2005" name="Nature">
        <title>The genome of the social amoeba Dictyostelium discoideum.</title>
        <authorList>
            <person name="Eichinger L."/>
            <person name="Pachebat J.A."/>
            <person name="Gloeckner G."/>
            <person name="Rajandream M.A."/>
            <person name="Sucgang R."/>
            <person name="Berriman M."/>
            <person name="Song J."/>
            <person name="Olsen R."/>
            <person name="Szafranski K."/>
            <person name="Xu Q."/>
            <person name="Tunggal B."/>
            <person name="Kummerfeld S."/>
            <person name="Madera M."/>
            <person name="Konfortov B.A."/>
            <person name="Rivero F."/>
            <person name="Bankier A.T."/>
            <person name="Lehmann R."/>
            <person name="Hamlin N."/>
            <person name="Davies R."/>
            <person name="Gaudet P."/>
            <person name="Fey P."/>
            <person name="Pilcher K."/>
            <person name="Chen G."/>
            <person name="Saunders D."/>
            <person name="Sodergren E.J."/>
            <person name="Davis P."/>
            <person name="Kerhornou A."/>
            <person name="Nie X."/>
            <person name="Hall N."/>
            <person name="Anjard C."/>
            <person name="Hemphill L."/>
            <person name="Bason N."/>
            <person name="Farbrother P."/>
            <person name="Desany B."/>
            <person name="Just E."/>
            <person name="Morio T."/>
            <person name="Rost R."/>
            <person name="Churcher C.M."/>
            <person name="Cooper J."/>
            <person name="Haydock S."/>
            <person name="van Driessche N."/>
            <person name="Cronin A."/>
            <person name="Goodhead I."/>
            <person name="Muzny D.M."/>
            <person name="Mourier T."/>
            <person name="Pain A."/>
            <person name="Lu M."/>
            <person name="Harper D."/>
            <person name="Lindsay R."/>
            <person name="Hauser H."/>
            <person name="James K.D."/>
            <person name="Quiles M."/>
            <person name="Madan Babu M."/>
            <person name="Saito T."/>
            <person name="Buchrieser C."/>
            <person name="Wardroper A."/>
            <person name="Felder M."/>
            <person name="Thangavelu M."/>
            <person name="Johnson D."/>
            <person name="Knights A."/>
            <person name="Loulseged H."/>
            <person name="Mungall K.L."/>
            <person name="Oliver K."/>
            <person name="Price C."/>
            <person name="Quail M.A."/>
            <person name="Urushihara H."/>
            <person name="Hernandez J."/>
            <person name="Rabbinowitsch E."/>
            <person name="Steffen D."/>
            <person name="Sanders M."/>
            <person name="Ma J."/>
            <person name="Kohara Y."/>
            <person name="Sharp S."/>
            <person name="Simmonds M.N."/>
            <person name="Spiegler S."/>
            <person name="Tivey A."/>
            <person name="Sugano S."/>
            <person name="White B."/>
            <person name="Walker D."/>
            <person name="Woodward J.R."/>
            <person name="Winckler T."/>
            <person name="Tanaka Y."/>
            <person name="Shaulsky G."/>
            <person name="Schleicher M."/>
            <person name="Weinstock G.M."/>
            <person name="Rosenthal A."/>
            <person name="Cox E.C."/>
            <person name="Chisholm R.L."/>
            <person name="Gibbs R.A."/>
            <person name="Loomis W.F."/>
            <person name="Platzer M."/>
            <person name="Kay R.R."/>
            <person name="Williams J.G."/>
            <person name="Dear P.H."/>
            <person name="Noegel A.A."/>
            <person name="Barrell B.G."/>
            <person name="Kuspa A."/>
        </authorList>
    </citation>
    <scope>NUCLEOTIDE SEQUENCE [LARGE SCALE GENOMIC DNA]</scope>
    <source>
        <strain>AX4</strain>
    </source>
</reference>
<organism>
    <name type="scientific">Dictyostelium discoideum</name>
    <name type="common">Social amoeba</name>
    <dbReference type="NCBI Taxonomy" id="44689"/>
    <lineage>
        <taxon>Eukaryota</taxon>
        <taxon>Amoebozoa</taxon>
        <taxon>Evosea</taxon>
        <taxon>Eumycetozoa</taxon>
        <taxon>Dictyostelia</taxon>
        <taxon>Dictyosteliales</taxon>
        <taxon>Dictyosteliaceae</taxon>
        <taxon>Dictyostelium</taxon>
    </lineage>
</organism>
<keyword id="KW-0067">ATP-binding</keyword>
<keyword id="KW-0325">Glycoprotein</keyword>
<keyword id="KW-0378">Hydrolase</keyword>
<keyword id="KW-0472">Membrane</keyword>
<keyword id="KW-0547">Nucleotide-binding</keyword>
<keyword id="KW-0645">Protease</keyword>
<keyword id="KW-1185">Reference proteome</keyword>
<keyword id="KW-0720">Serine protease</keyword>
<keyword id="KW-0732">Signal</keyword>
<keyword id="KW-0812">Transmembrane</keyword>
<keyword id="KW-1133">Transmembrane helix</keyword>
<keyword id="KW-0813">Transport</keyword>
<protein>
    <recommendedName>
        <fullName>Serine protease/ABC transporter B family protein tagD</fullName>
        <ecNumber>3.4.21.-</ecNumber>
    </recommendedName>
    <alternativeName>
        <fullName>Serine protease/ABC transporter tagD</fullName>
    </alternativeName>
</protein>
<dbReference type="EC" id="3.4.21.-"/>
<dbReference type="EMBL" id="AF466309">
    <property type="protein sequence ID" value="AAL74253.1"/>
    <property type="molecule type" value="Genomic_DNA"/>
</dbReference>
<dbReference type="EMBL" id="AAFI02000085">
    <property type="protein sequence ID" value="EAL64354.1"/>
    <property type="molecule type" value="Genomic_DNA"/>
</dbReference>
<dbReference type="RefSeq" id="XP_637863.1">
    <property type="nucleotide sequence ID" value="XM_632771.1"/>
</dbReference>
<dbReference type="SMR" id="Q8T9W1"/>
<dbReference type="FunCoup" id="Q8T9W1">
    <property type="interactions" value="488"/>
</dbReference>
<dbReference type="STRING" id="44689.Q8T9W1"/>
<dbReference type="MEROPS" id="S08.A57"/>
<dbReference type="GlyCosmos" id="Q8T9W1">
    <property type="glycosylation" value="11 sites, No reported glycans"/>
</dbReference>
<dbReference type="GlyGen" id="Q8T9W1">
    <property type="glycosylation" value="12 sites"/>
</dbReference>
<dbReference type="PaxDb" id="44689-DDB0191427"/>
<dbReference type="EnsemblProtists" id="EAL64354">
    <property type="protein sequence ID" value="EAL64354"/>
    <property type="gene ID" value="DDB_G0286123"/>
</dbReference>
<dbReference type="GeneID" id="8625460"/>
<dbReference type="KEGG" id="ddi:DDB_G0286123"/>
<dbReference type="dictyBase" id="DDB_G0286123">
    <property type="gene designation" value="tagD"/>
</dbReference>
<dbReference type="VEuPathDB" id="AmoebaDB:DDB_G0286123"/>
<dbReference type="eggNOG" id="KOG0055">
    <property type="taxonomic scope" value="Eukaryota"/>
</dbReference>
<dbReference type="eggNOG" id="KOG0058">
    <property type="taxonomic scope" value="Eukaryota"/>
</dbReference>
<dbReference type="HOGENOM" id="CLU_235711_0_0_1"/>
<dbReference type="InParanoid" id="Q8T9W1"/>
<dbReference type="PhylomeDB" id="Q8T9W1"/>
<dbReference type="Reactome" id="R-DDI-1369007">
    <property type="pathway name" value="Mitochondrial ABC transporters"/>
</dbReference>
<dbReference type="Reactome" id="R-DDI-159418">
    <property type="pathway name" value="Recycling of bile acids and salts"/>
</dbReference>
<dbReference type="Reactome" id="R-DDI-193368">
    <property type="pathway name" value="Synthesis of bile acids and bile salts via 7alpha-hydroxycholesterol"/>
</dbReference>
<dbReference type="Reactome" id="R-DDI-382556">
    <property type="pathway name" value="ABC-family proteins mediated transport"/>
</dbReference>
<dbReference type="Reactome" id="R-DDI-9754706">
    <property type="pathway name" value="Atorvastatin ADME"/>
</dbReference>
<dbReference type="Reactome" id="R-DDI-9757110">
    <property type="pathway name" value="Prednisone ADME"/>
</dbReference>
<dbReference type="PRO" id="PR:Q8T9W1"/>
<dbReference type="Proteomes" id="UP000002195">
    <property type="component" value="Chromosome 4"/>
</dbReference>
<dbReference type="GO" id="GO:0016020">
    <property type="term" value="C:membrane"/>
    <property type="evidence" value="ECO:0000318"/>
    <property type="project" value="GO_Central"/>
</dbReference>
<dbReference type="GO" id="GO:0140359">
    <property type="term" value="F:ABC-type transporter activity"/>
    <property type="evidence" value="ECO:0007669"/>
    <property type="project" value="InterPro"/>
</dbReference>
<dbReference type="GO" id="GO:0005524">
    <property type="term" value="F:ATP binding"/>
    <property type="evidence" value="ECO:0007669"/>
    <property type="project" value="UniProtKB-KW"/>
</dbReference>
<dbReference type="GO" id="GO:0016887">
    <property type="term" value="F:ATP hydrolysis activity"/>
    <property type="evidence" value="ECO:0007669"/>
    <property type="project" value="InterPro"/>
</dbReference>
<dbReference type="GO" id="GO:0042626">
    <property type="term" value="F:ATPase-coupled transmembrane transporter activity"/>
    <property type="evidence" value="ECO:0000318"/>
    <property type="project" value="GO_Central"/>
</dbReference>
<dbReference type="GO" id="GO:0004252">
    <property type="term" value="F:serine-type endopeptidase activity"/>
    <property type="evidence" value="ECO:0007669"/>
    <property type="project" value="InterPro"/>
</dbReference>
<dbReference type="GO" id="GO:0006508">
    <property type="term" value="P:proteolysis"/>
    <property type="evidence" value="ECO:0007669"/>
    <property type="project" value="UniProtKB-KW"/>
</dbReference>
<dbReference type="GO" id="GO:0055085">
    <property type="term" value="P:transmembrane transport"/>
    <property type="evidence" value="ECO:0000318"/>
    <property type="project" value="GO_Central"/>
</dbReference>
<dbReference type="CDD" id="cd18557">
    <property type="entry name" value="ABC_6TM_TAP_ABCB8_10_like"/>
    <property type="match status" value="1"/>
</dbReference>
<dbReference type="CDD" id="cd04842">
    <property type="entry name" value="Peptidases_S8_Kp43_protease"/>
    <property type="match status" value="1"/>
</dbReference>
<dbReference type="FunFam" id="1.20.1560.10:FF:000193">
    <property type="entry name" value="ABC transporter B family member 7"/>
    <property type="match status" value="1"/>
</dbReference>
<dbReference type="FunFam" id="2.60.120.380:FF:000024">
    <property type="entry name" value="Serine protease/ABC transporter B family protein tagA"/>
    <property type="match status" value="1"/>
</dbReference>
<dbReference type="FunFam" id="3.40.50.300:FF:001982">
    <property type="entry name" value="Serine protease/ABC transporter B family protein tagC"/>
    <property type="match status" value="1"/>
</dbReference>
<dbReference type="Gene3D" id="2.60.120.380">
    <property type="match status" value="1"/>
</dbReference>
<dbReference type="Gene3D" id="1.20.1560.10">
    <property type="entry name" value="ABC transporter type 1, transmembrane domain"/>
    <property type="match status" value="1"/>
</dbReference>
<dbReference type="Gene3D" id="3.40.50.300">
    <property type="entry name" value="P-loop containing nucleotide triphosphate hydrolases"/>
    <property type="match status" value="1"/>
</dbReference>
<dbReference type="Gene3D" id="3.40.50.200">
    <property type="entry name" value="Peptidase S8/S53 domain"/>
    <property type="match status" value="1"/>
</dbReference>
<dbReference type="InterPro" id="IPR003593">
    <property type="entry name" value="AAA+_ATPase"/>
</dbReference>
<dbReference type="InterPro" id="IPR011527">
    <property type="entry name" value="ABC1_TM_dom"/>
</dbReference>
<dbReference type="InterPro" id="IPR036640">
    <property type="entry name" value="ABC1_TM_sf"/>
</dbReference>
<dbReference type="InterPro" id="IPR003439">
    <property type="entry name" value="ABC_transporter-like_ATP-bd"/>
</dbReference>
<dbReference type="InterPro" id="IPR017871">
    <property type="entry name" value="ABC_transporter-like_CS"/>
</dbReference>
<dbReference type="InterPro" id="IPR008979">
    <property type="entry name" value="Galactose-bd-like_sf"/>
</dbReference>
<dbReference type="InterPro" id="IPR027417">
    <property type="entry name" value="P-loop_NTPase"/>
</dbReference>
<dbReference type="InterPro" id="IPR000209">
    <property type="entry name" value="Peptidase_S8/S53_dom"/>
</dbReference>
<dbReference type="InterPro" id="IPR036852">
    <property type="entry name" value="Peptidase_S8/S53_dom_sf"/>
</dbReference>
<dbReference type="InterPro" id="IPR022398">
    <property type="entry name" value="Peptidase_S8_His-AS"/>
</dbReference>
<dbReference type="InterPro" id="IPR023828">
    <property type="entry name" value="Peptidase_S8_Ser-AS"/>
</dbReference>
<dbReference type="InterPro" id="IPR015500">
    <property type="entry name" value="Peptidase_S8_subtilisin-rel"/>
</dbReference>
<dbReference type="InterPro" id="IPR034058">
    <property type="entry name" value="TagA/B/C/D_pept_dom"/>
</dbReference>
<dbReference type="InterPro" id="IPR039421">
    <property type="entry name" value="Type_1_exporter"/>
</dbReference>
<dbReference type="PANTHER" id="PTHR24221">
    <property type="entry name" value="ATP-BINDING CASSETTE SUB-FAMILY B"/>
    <property type="match status" value="1"/>
</dbReference>
<dbReference type="PANTHER" id="PTHR24221:SF395">
    <property type="entry name" value="SERINE PROTEASE_ABC TRANSPORTER B FAMILY PROTEIN TAGC-RELATED"/>
    <property type="match status" value="1"/>
</dbReference>
<dbReference type="Pfam" id="PF00664">
    <property type="entry name" value="ABC_membrane"/>
    <property type="match status" value="1"/>
</dbReference>
<dbReference type="Pfam" id="PF00005">
    <property type="entry name" value="ABC_tran"/>
    <property type="match status" value="1"/>
</dbReference>
<dbReference type="Pfam" id="PF00082">
    <property type="entry name" value="Peptidase_S8"/>
    <property type="match status" value="1"/>
</dbReference>
<dbReference type="PRINTS" id="PR00723">
    <property type="entry name" value="SUBTILISIN"/>
</dbReference>
<dbReference type="SMART" id="SM00382">
    <property type="entry name" value="AAA"/>
    <property type="match status" value="1"/>
</dbReference>
<dbReference type="SUPFAM" id="SSF90123">
    <property type="entry name" value="ABC transporter transmembrane region"/>
    <property type="match status" value="1"/>
</dbReference>
<dbReference type="SUPFAM" id="SSF49785">
    <property type="entry name" value="Galactose-binding domain-like"/>
    <property type="match status" value="1"/>
</dbReference>
<dbReference type="SUPFAM" id="SSF52540">
    <property type="entry name" value="P-loop containing nucleoside triphosphate hydrolases"/>
    <property type="match status" value="1"/>
</dbReference>
<dbReference type="SUPFAM" id="SSF52743">
    <property type="entry name" value="Subtilisin-like"/>
    <property type="match status" value="1"/>
</dbReference>
<dbReference type="PROSITE" id="PS50929">
    <property type="entry name" value="ABC_TM1F"/>
    <property type="match status" value="1"/>
</dbReference>
<dbReference type="PROSITE" id="PS00211">
    <property type="entry name" value="ABC_TRANSPORTER_1"/>
    <property type="match status" value="1"/>
</dbReference>
<dbReference type="PROSITE" id="PS50893">
    <property type="entry name" value="ABC_TRANSPORTER_2"/>
    <property type="match status" value="1"/>
</dbReference>
<dbReference type="PROSITE" id="PS51892">
    <property type="entry name" value="SUBTILASE"/>
    <property type="match status" value="1"/>
</dbReference>
<dbReference type="PROSITE" id="PS00137">
    <property type="entry name" value="SUBTILASE_HIS"/>
    <property type="match status" value="1"/>
</dbReference>
<dbReference type="PROSITE" id="PS00138">
    <property type="entry name" value="SUBTILASE_SER"/>
    <property type="match status" value="1"/>
</dbReference>
<feature type="signal peptide" evidence="1">
    <location>
        <begin position="1"/>
        <end position="26"/>
    </location>
</feature>
<feature type="chain" id="PRO_0000330362" description="Serine protease/ABC transporter B family protein tagD">
    <location>
        <begin position="27"/>
        <end position="1825"/>
    </location>
</feature>
<feature type="transmembrane region" description="Helical" evidence="3">
    <location>
        <begin position="971"/>
        <end position="991"/>
    </location>
</feature>
<feature type="transmembrane region" description="Helical" evidence="3">
    <location>
        <begin position="1071"/>
        <end position="1091"/>
    </location>
</feature>
<feature type="transmembrane region" description="Helical" evidence="3">
    <location>
        <begin position="1116"/>
        <end position="1136"/>
    </location>
</feature>
<feature type="transmembrane region" description="Helical" evidence="3">
    <location>
        <begin position="1189"/>
        <end position="1209"/>
    </location>
</feature>
<feature type="transmembrane region" description="Helical" evidence="3">
    <location>
        <begin position="1210"/>
        <end position="1230"/>
    </location>
</feature>
<feature type="transmembrane region" description="Helical" evidence="3">
    <location>
        <begin position="1304"/>
        <end position="1324"/>
    </location>
</feature>
<feature type="transmembrane region" description="Helical" evidence="3">
    <location>
        <begin position="1327"/>
        <end position="1347"/>
    </location>
</feature>
<feature type="domain" description="Peptidase S8" evidence="4">
    <location>
        <begin position="307"/>
        <end position="727"/>
    </location>
</feature>
<feature type="domain" description="ABC transmembrane type-1" evidence="3">
    <location>
        <begin position="1075"/>
        <end position="1358"/>
    </location>
</feature>
<feature type="domain" description="ABC transporter" evidence="2">
    <location>
        <begin position="1576"/>
        <end position="1813"/>
    </location>
</feature>
<feature type="region of interest" description="Disordered" evidence="5">
    <location>
        <begin position="1386"/>
        <end position="1529"/>
    </location>
</feature>
<feature type="compositionally biased region" description="Low complexity" evidence="5">
    <location>
        <begin position="1388"/>
        <end position="1402"/>
    </location>
</feature>
<feature type="compositionally biased region" description="Acidic residues" evidence="5">
    <location>
        <begin position="1403"/>
        <end position="1415"/>
    </location>
</feature>
<feature type="compositionally biased region" description="Low complexity" evidence="5">
    <location>
        <begin position="1465"/>
        <end position="1494"/>
    </location>
</feature>
<feature type="compositionally biased region" description="Acidic residues" evidence="5">
    <location>
        <begin position="1495"/>
        <end position="1514"/>
    </location>
</feature>
<feature type="compositionally biased region" description="Low complexity" evidence="5">
    <location>
        <begin position="1515"/>
        <end position="1529"/>
    </location>
</feature>
<feature type="active site" description="Charge relay system" evidence="4">
    <location>
        <position position="338"/>
    </location>
</feature>
<feature type="active site" description="Charge relay system" evidence="4">
    <location>
        <position position="384"/>
    </location>
</feature>
<feature type="active site" description="Charge relay system" evidence="4">
    <location>
        <position position="652"/>
    </location>
</feature>
<feature type="binding site" evidence="2">
    <location>
        <begin position="1611"/>
        <end position="1618"/>
    </location>
    <ligand>
        <name>ATP</name>
        <dbReference type="ChEBI" id="CHEBI:30616"/>
    </ligand>
</feature>
<feature type="glycosylation site" description="N-linked (GlcNAc...) asparagine" evidence="1">
    <location>
        <position position="629"/>
    </location>
</feature>
<feature type="glycosylation site" description="N-linked (GlcNAc...) asparagine" evidence="1">
    <location>
        <position position="704"/>
    </location>
</feature>
<feature type="glycosylation site" description="N-linked (GlcNAc...) asparagine" evidence="1">
    <location>
        <position position="781"/>
    </location>
</feature>
<feature type="glycosylation site" description="N-linked (GlcNAc...) asparagine" evidence="1">
    <location>
        <position position="849"/>
    </location>
</feature>
<feature type="glycosylation site" description="N-linked (GlcNAc...) asparagine" evidence="1">
    <location>
        <position position="896"/>
    </location>
</feature>
<feature type="glycosylation site" description="N-linked (GlcNAc...) asparagine" evidence="1">
    <location>
        <position position="1018"/>
    </location>
</feature>
<feature type="glycosylation site" description="N-linked (GlcNAc...) asparagine" evidence="1">
    <location>
        <position position="1295"/>
    </location>
</feature>
<feature type="glycosylation site" description="N-linked (GlcNAc...) asparagine" evidence="1">
    <location>
        <position position="1424"/>
    </location>
</feature>
<feature type="glycosylation site" description="N-linked (GlcNAc...) asparagine" evidence="1">
    <location>
        <position position="1580"/>
    </location>
</feature>
<feature type="glycosylation site" description="N-linked (GlcNAc...) asparagine" evidence="1">
    <location>
        <position position="1715"/>
    </location>
</feature>
<feature type="glycosylation site" description="N-linked (GlcNAc...) asparagine" evidence="1">
    <location>
        <position position="1755"/>
    </location>
</feature>